<reference key="1">
    <citation type="journal article" date="1996" name="FEBS Lett.">
        <title>Starch synthesis, and tuber storage protein genes are differently expressed in Solanum tuberosum and in Solanum brevidens.</title>
        <authorList>
            <person name="Banfalvi Z."/>
            <person name="Molnar A."/>
            <person name="Molnar G."/>
            <person name="Lakatos L."/>
            <person name="Szabo L."/>
        </authorList>
    </citation>
    <scope>NUCLEOTIDE SEQUENCE [MRNA]</scope>
    <source>
        <strain>cv. Keszthelyi 855 (White lady)</strain>
        <tissue>Etiolated shoot</tissue>
    </source>
</reference>
<organism>
    <name type="scientific">Solanum tuberosum</name>
    <name type="common">Potato</name>
    <dbReference type="NCBI Taxonomy" id="4113"/>
    <lineage>
        <taxon>Eukaryota</taxon>
        <taxon>Viridiplantae</taxon>
        <taxon>Streptophyta</taxon>
        <taxon>Embryophyta</taxon>
        <taxon>Tracheophyta</taxon>
        <taxon>Spermatophyta</taxon>
        <taxon>Magnoliopsida</taxon>
        <taxon>eudicotyledons</taxon>
        <taxon>Gunneridae</taxon>
        <taxon>Pentapetalae</taxon>
        <taxon>asterids</taxon>
        <taxon>lamiids</taxon>
        <taxon>Solanales</taxon>
        <taxon>Solanaceae</taxon>
        <taxon>Solanoideae</taxon>
        <taxon>Solaneae</taxon>
        <taxon>Solanum</taxon>
    </lineage>
</organism>
<proteinExistence type="evidence at transcript level"/>
<keyword id="KW-1015">Disulfide bond</keyword>
<keyword id="KW-0646">Protease inhibitor</keyword>
<keyword id="KW-1185">Reference proteome</keyword>
<keyword id="KW-0722">Serine protease inhibitor</keyword>
<keyword id="KW-0732">Signal</keyword>
<keyword id="KW-0926">Vacuole</keyword>
<protein>
    <recommendedName>
        <fullName>Probable serine protease inhibitor 6</fullName>
    </recommendedName>
    <alternativeName>
        <fullName>AM66</fullName>
    </alternativeName>
</protein>
<sequence>MKCLFLLCLCLFPIVVFSSTFTSQNPINLPSDATPVLDVTGKELDPRLSYHIISTFWGALGGDVYLGKSPNSDAPCANGIFRYNSDVGPSGTPVRFIGSSSHFGQGIFENELLNIQFAISTSKLCVSYTIWKVGDYDASLGTMLLETGGTIGQADSSWFKIVQSSQFGYNLLYCPVTSTMSCPFSSDDQFCLKVGVVHQNGKRRLALVKDNPLDVSFKQVQ</sequence>
<accession>Q41433</accession>
<feature type="signal peptide" evidence="1">
    <location>
        <begin position="1"/>
        <end position="22"/>
    </location>
</feature>
<feature type="propeptide" id="PRO_0000016906" evidence="1">
    <location>
        <begin position="23"/>
        <end position="28"/>
    </location>
</feature>
<feature type="chain" id="PRO_0000016907" description="Probable serine protease inhibitor 6">
    <location>
        <begin position="29"/>
        <end position="221"/>
    </location>
</feature>
<feature type="short sequence motif" description="Vacuolar targeting signal" evidence="1">
    <location>
        <begin position="25"/>
        <end position="30"/>
    </location>
</feature>
<feature type="site" description="Reactive bond for trypsin" evidence="1">
    <location>
        <begin position="95"/>
        <end position="96"/>
    </location>
</feature>
<feature type="site" description="Reactive bond for chymotrypsin" evidence="1">
    <location>
        <begin position="143"/>
        <end position="144"/>
    </location>
</feature>
<feature type="disulfide bond" evidence="1">
    <location>
        <begin position="76"/>
        <end position="125"/>
    </location>
</feature>
<feature type="disulfide bond" evidence="1">
    <location>
        <begin position="174"/>
        <end position="191"/>
    </location>
</feature>
<comment type="function">
    <text evidence="1">Inhibitor of trypsin (serine protease). May protect the plant by inhibiting proteases of invading organisms (By similarity).</text>
</comment>
<comment type="subcellular location">
    <subcellularLocation>
        <location evidence="1">Vacuole</location>
    </subcellularLocation>
</comment>
<comment type="induction">
    <text>By sucrose.</text>
</comment>
<comment type="similarity">
    <text evidence="2">Belongs to the protease inhibitor I3 (leguminous Kunitz-type inhibitor) family.</text>
</comment>
<dbReference type="EMBL" id="U30814">
    <property type="protein sequence ID" value="AAC49602.1"/>
    <property type="molecule type" value="mRNA"/>
</dbReference>
<dbReference type="PIR" id="S66277">
    <property type="entry name" value="S66277"/>
</dbReference>
<dbReference type="SMR" id="Q41433"/>
<dbReference type="MEROPS" id="I03.020"/>
<dbReference type="InParanoid" id="Q41433"/>
<dbReference type="Proteomes" id="UP000011115">
    <property type="component" value="Unassembled WGS sequence"/>
</dbReference>
<dbReference type="ExpressionAtlas" id="Q41433">
    <property type="expression patterns" value="baseline"/>
</dbReference>
<dbReference type="GO" id="GO:0005773">
    <property type="term" value="C:vacuole"/>
    <property type="evidence" value="ECO:0007669"/>
    <property type="project" value="UniProtKB-SubCell"/>
</dbReference>
<dbReference type="GO" id="GO:0004867">
    <property type="term" value="F:serine-type endopeptidase inhibitor activity"/>
    <property type="evidence" value="ECO:0007669"/>
    <property type="project" value="UniProtKB-KW"/>
</dbReference>
<dbReference type="CDD" id="cd23372">
    <property type="entry name" value="beta-trefoil_STI_CPI-like"/>
    <property type="match status" value="1"/>
</dbReference>
<dbReference type="FunFam" id="2.80.10.50:FF:000090">
    <property type="entry name" value="Kunitz-type inhibitor B"/>
    <property type="match status" value="1"/>
</dbReference>
<dbReference type="Gene3D" id="2.80.10.50">
    <property type="match status" value="1"/>
</dbReference>
<dbReference type="InterPro" id="IPR011065">
    <property type="entry name" value="Kunitz_inhibitor_STI-like_sf"/>
</dbReference>
<dbReference type="InterPro" id="IPR002160">
    <property type="entry name" value="Prot_inh_Kunz-lg"/>
</dbReference>
<dbReference type="PANTHER" id="PTHR33107">
    <property type="entry name" value="KUNITZ TRYPSIN INHIBITOR 2"/>
    <property type="match status" value="1"/>
</dbReference>
<dbReference type="PANTHER" id="PTHR33107:SF38">
    <property type="entry name" value="SERINE PROTEASE INHIBITOR 5"/>
    <property type="match status" value="1"/>
</dbReference>
<dbReference type="Pfam" id="PF00197">
    <property type="entry name" value="Kunitz_legume"/>
    <property type="match status" value="1"/>
</dbReference>
<dbReference type="PRINTS" id="PR00291">
    <property type="entry name" value="KUNITZINHBTR"/>
</dbReference>
<dbReference type="SMART" id="SM00452">
    <property type="entry name" value="STI"/>
    <property type="match status" value="1"/>
</dbReference>
<dbReference type="SUPFAM" id="SSF50386">
    <property type="entry name" value="STI-like"/>
    <property type="match status" value="1"/>
</dbReference>
<dbReference type="PROSITE" id="PS00283">
    <property type="entry name" value="SOYBEAN_KUNITZ"/>
    <property type="match status" value="1"/>
</dbReference>
<name>SPI6_SOLTU</name>
<evidence type="ECO:0000250" key="1"/>
<evidence type="ECO:0000305" key="2"/>